<name>HISX_SALPA</name>
<comment type="function">
    <text evidence="1">Catalyzes the sequential NAD-dependent oxidations of L-histidinol to L-histidinaldehyde and then to L-histidine.</text>
</comment>
<comment type="catalytic activity">
    <reaction evidence="1">
        <text>L-histidinol + 2 NAD(+) + H2O = L-histidine + 2 NADH + 3 H(+)</text>
        <dbReference type="Rhea" id="RHEA:20641"/>
        <dbReference type="ChEBI" id="CHEBI:15377"/>
        <dbReference type="ChEBI" id="CHEBI:15378"/>
        <dbReference type="ChEBI" id="CHEBI:57540"/>
        <dbReference type="ChEBI" id="CHEBI:57595"/>
        <dbReference type="ChEBI" id="CHEBI:57699"/>
        <dbReference type="ChEBI" id="CHEBI:57945"/>
        <dbReference type="EC" id="1.1.1.23"/>
    </reaction>
</comment>
<comment type="cofactor">
    <cofactor evidence="1">
        <name>Zn(2+)</name>
        <dbReference type="ChEBI" id="CHEBI:29105"/>
    </cofactor>
    <text evidence="1">Binds 1 zinc ion per subunit.</text>
</comment>
<comment type="pathway">
    <text evidence="1">Amino-acid biosynthesis; L-histidine biosynthesis; L-histidine from 5-phospho-alpha-D-ribose 1-diphosphate: step 9/9.</text>
</comment>
<comment type="subunit">
    <text evidence="1">Homodimer.</text>
</comment>
<comment type="similarity">
    <text evidence="1">Belongs to the histidinol dehydrogenase family.</text>
</comment>
<protein>
    <recommendedName>
        <fullName evidence="1">Histidinol dehydrogenase</fullName>
        <shortName evidence="1">HDH</shortName>
        <ecNumber evidence="1">1.1.1.23</ecNumber>
    </recommendedName>
</protein>
<gene>
    <name evidence="1" type="primary">hisD</name>
    <name type="ordered locus">SPA0799</name>
</gene>
<evidence type="ECO:0000255" key="1">
    <source>
        <dbReference type="HAMAP-Rule" id="MF_01024"/>
    </source>
</evidence>
<sequence>MSFNTLIDWNSCSPEQQRALLTRPAISASDSITRTVSDILYNVKTRGDDVLREYSAKFDKTEVTALRVTPEEIAAAGARLSDELKQAMAAAVKNIETFHSAQTLPPVDVETQPGVRCQQVTRPVASVGLYIPGGSAPLFSTVLMLATPARIAGCQKVVLCSPPPIADEILYAAQLCGVQEIFNVGGAQAIAALAFGSESVPKVDKIFGPGNAFVTEAKRQVSQRLDGAAIDMPAGPSEVLVIADSGATPDFVASDLLSQAEHGPDSQVILLTPDADIARKVAEAVERQLAELPRADTARQALSASRLIVTKDLAQCVAISNQYGPEHLIIQTRNARDLVDAITSAGSVFLGDWSPESAGDYASGTNHVLPTYGYTATCSSLGLADFQKRMTVQELSKAGFSALASTIETLAAAERLTAHKNAVTLRVNALKEQA</sequence>
<accession>Q5PDP3</accession>
<reference key="1">
    <citation type="journal article" date="2004" name="Nat. Genet.">
        <title>Comparison of genome degradation in Paratyphi A and Typhi, human-restricted serovars of Salmonella enterica that cause typhoid.</title>
        <authorList>
            <person name="McClelland M."/>
            <person name="Sanderson K.E."/>
            <person name="Clifton S.W."/>
            <person name="Latreille P."/>
            <person name="Porwollik S."/>
            <person name="Sabo A."/>
            <person name="Meyer R."/>
            <person name="Bieri T."/>
            <person name="Ozersky P."/>
            <person name="McLellan M."/>
            <person name="Harkins C.R."/>
            <person name="Wang C."/>
            <person name="Nguyen C."/>
            <person name="Berghoff A."/>
            <person name="Elliott G."/>
            <person name="Kohlberg S."/>
            <person name="Strong C."/>
            <person name="Du F."/>
            <person name="Carter J."/>
            <person name="Kremizki C."/>
            <person name="Layman D."/>
            <person name="Leonard S."/>
            <person name="Sun H."/>
            <person name="Fulton L."/>
            <person name="Nash W."/>
            <person name="Miner T."/>
            <person name="Minx P."/>
            <person name="Delehaunty K."/>
            <person name="Fronick C."/>
            <person name="Magrini V."/>
            <person name="Nhan M."/>
            <person name="Warren W."/>
            <person name="Florea L."/>
            <person name="Spieth J."/>
            <person name="Wilson R.K."/>
        </authorList>
    </citation>
    <scope>NUCLEOTIDE SEQUENCE [LARGE SCALE GENOMIC DNA]</scope>
    <source>
        <strain>ATCC 9150 / SARB42</strain>
    </source>
</reference>
<dbReference type="EC" id="1.1.1.23" evidence="1"/>
<dbReference type="EMBL" id="CP000026">
    <property type="protein sequence ID" value="AAV76792.1"/>
    <property type="molecule type" value="Genomic_DNA"/>
</dbReference>
<dbReference type="RefSeq" id="WP_000009630.1">
    <property type="nucleotide sequence ID" value="NC_006511.1"/>
</dbReference>
<dbReference type="SMR" id="Q5PDP3"/>
<dbReference type="KEGG" id="spt:SPA0799"/>
<dbReference type="HOGENOM" id="CLU_006732_3_0_6"/>
<dbReference type="UniPathway" id="UPA00031">
    <property type="reaction ID" value="UER00014"/>
</dbReference>
<dbReference type="Proteomes" id="UP000008185">
    <property type="component" value="Chromosome"/>
</dbReference>
<dbReference type="GO" id="GO:0005829">
    <property type="term" value="C:cytosol"/>
    <property type="evidence" value="ECO:0007669"/>
    <property type="project" value="TreeGrafter"/>
</dbReference>
<dbReference type="GO" id="GO:0004399">
    <property type="term" value="F:histidinol dehydrogenase activity"/>
    <property type="evidence" value="ECO:0007669"/>
    <property type="project" value="UniProtKB-UniRule"/>
</dbReference>
<dbReference type="GO" id="GO:0051287">
    <property type="term" value="F:NAD binding"/>
    <property type="evidence" value="ECO:0007669"/>
    <property type="project" value="InterPro"/>
</dbReference>
<dbReference type="GO" id="GO:0008270">
    <property type="term" value="F:zinc ion binding"/>
    <property type="evidence" value="ECO:0007669"/>
    <property type="project" value="UniProtKB-UniRule"/>
</dbReference>
<dbReference type="GO" id="GO:0000105">
    <property type="term" value="P:L-histidine biosynthetic process"/>
    <property type="evidence" value="ECO:0007669"/>
    <property type="project" value="UniProtKB-UniRule"/>
</dbReference>
<dbReference type="CDD" id="cd06572">
    <property type="entry name" value="Histidinol_dh"/>
    <property type="match status" value="1"/>
</dbReference>
<dbReference type="FunFam" id="1.20.5.1300:FF:000001">
    <property type="entry name" value="Histidine biosynthesis trifunctional protein"/>
    <property type="match status" value="1"/>
</dbReference>
<dbReference type="FunFam" id="3.40.50.1980:FF:000001">
    <property type="entry name" value="Histidinol dehydrogenase"/>
    <property type="match status" value="1"/>
</dbReference>
<dbReference type="Gene3D" id="1.20.5.1300">
    <property type="match status" value="1"/>
</dbReference>
<dbReference type="Gene3D" id="3.40.50.1980">
    <property type="entry name" value="Nitrogenase molybdenum iron protein domain"/>
    <property type="match status" value="2"/>
</dbReference>
<dbReference type="HAMAP" id="MF_01024">
    <property type="entry name" value="HisD"/>
    <property type="match status" value="1"/>
</dbReference>
<dbReference type="InterPro" id="IPR016161">
    <property type="entry name" value="Ald_DH/histidinol_DH"/>
</dbReference>
<dbReference type="InterPro" id="IPR001692">
    <property type="entry name" value="Histidinol_DH_CS"/>
</dbReference>
<dbReference type="InterPro" id="IPR022695">
    <property type="entry name" value="Histidinol_DH_monofunct"/>
</dbReference>
<dbReference type="InterPro" id="IPR012131">
    <property type="entry name" value="Hstdl_DH"/>
</dbReference>
<dbReference type="NCBIfam" id="TIGR00069">
    <property type="entry name" value="hisD"/>
    <property type="match status" value="1"/>
</dbReference>
<dbReference type="PANTHER" id="PTHR21256:SF2">
    <property type="entry name" value="HISTIDINE BIOSYNTHESIS TRIFUNCTIONAL PROTEIN"/>
    <property type="match status" value="1"/>
</dbReference>
<dbReference type="PANTHER" id="PTHR21256">
    <property type="entry name" value="HISTIDINOL DEHYDROGENASE HDH"/>
    <property type="match status" value="1"/>
</dbReference>
<dbReference type="Pfam" id="PF00815">
    <property type="entry name" value="Histidinol_dh"/>
    <property type="match status" value="1"/>
</dbReference>
<dbReference type="PIRSF" id="PIRSF000099">
    <property type="entry name" value="Histidinol_dh"/>
    <property type="match status" value="1"/>
</dbReference>
<dbReference type="PRINTS" id="PR00083">
    <property type="entry name" value="HOLDHDRGNASE"/>
</dbReference>
<dbReference type="SUPFAM" id="SSF53720">
    <property type="entry name" value="ALDH-like"/>
    <property type="match status" value="1"/>
</dbReference>
<dbReference type="PROSITE" id="PS00611">
    <property type="entry name" value="HISOL_DEHYDROGENASE"/>
    <property type="match status" value="1"/>
</dbReference>
<organism>
    <name type="scientific">Salmonella paratyphi A (strain ATCC 9150 / SARB42)</name>
    <dbReference type="NCBI Taxonomy" id="295319"/>
    <lineage>
        <taxon>Bacteria</taxon>
        <taxon>Pseudomonadati</taxon>
        <taxon>Pseudomonadota</taxon>
        <taxon>Gammaproteobacteria</taxon>
        <taxon>Enterobacterales</taxon>
        <taxon>Enterobacteriaceae</taxon>
        <taxon>Salmonella</taxon>
    </lineage>
</organism>
<feature type="chain" id="PRO_0000135838" description="Histidinol dehydrogenase">
    <location>
        <begin position="1"/>
        <end position="434"/>
    </location>
</feature>
<feature type="active site" description="Proton acceptor" evidence="1">
    <location>
        <position position="326"/>
    </location>
</feature>
<feature type="active site" description="Proton acceptor" evidence="1">
    <location>
        <position position="327"/>
    </location>
</feature>
<feature type="binding site" evidence="1">
    <location>
        <position position="130"/>
    </location>
    <ligand>
        <name>NAD(+)</name>
        <dbReference type="ChEBI" id="CHEBI:57540"/>
    </ligand>
</feature>
<feature type="binding site" evidence="1">
    <location>
        <position position="188"/>
    </location>
    <ligand>
        <name>NAD(+)</name>
        <dbReference type="ChEBI" id="CHEBI:57540"/>
    </ligand>
</feature>
<feature type="binding site" evidence="1">
    <location>
        <position position="211"/>
    </location>
    <ligand>
        <name>NAD(+)</name>
        <dbReference type="ChEBI" id="CHEBI:57540"/>
    </ligand>
</feature>
<feature type="binding site" evidence="1">
    <location>
        <position position="237"/>
    </location>
    <ligand>
        <name>substrate</name>
    </ligand>
</feature>
<feature type="binding site" evidence="1">
    <location>
        <position position="259"/>
    </location>
    <ligand>
        <name>substrate</name>
    </ligand>
</feature>
<feature type="binding site" evidence="1">
    <location>
        <position position="259"/>
    </location>
    <ligand>
        <name>Zn(2+)</name>
        <dbReference type="ChEBI" id="CHEBI:29105"/>
    </ligand>
</feature>
<feature type="binding site" evidence="1">
    <location>
        <position position="262"/>
    </location>
    <ligand>
        <name>substrate</name>
    </ligand>
</feature>
<feature type="binding site" evidence="1">
    <location>
        <position position="262"/>
    </location>
    <ligand>
        <name>Zn(2+)</name>
        <dbReference type="ChEBI" id="CHEBI:29105"/>
    </ligand>
</feature>
<feature type="binding site" evidence="1">
    <location>
        <position position="327"/>
    </location>
    <ligand>
        <name>substrate</name>
    </ligand>
</feature>
<feature type="binding site" evidence="1">
    <location>
        <position position="360"/>
    </location>
    <ligand>
        <name>substrate</name>
    </ligand>
</feature>
<feature type="binding site" evidence="1">
    <location>
        <position position="360"/>
    </location>
    <ligand>
        <name>Zn(2+)</name>
        <dbReference type="ChEBI" id="CHEBI:29105"/>
    </ligand>
</feature>
<feature type="binding site" evidence="1">
    <location>
        <position position="414"/>
    </location>
    <ligand>
        <name>substrate</name>
    </ligand>
</feature>
<feature type="binding site" evidence="1">
    <location>
        <position position="419"/>
    </location>
    <ligand>
        <name>substrate</name>
    </ligand>
</feature>
<feature type="binding site" evidence="1">
    <location>
        <position position="419"/>
    </location>
    <ligand>
        <name>Zn(2+)</name>
        <dbReference type="ChEBI" id="CHEBI:29105"/>
    </ligand>
</feature>
<proteinExistence type="inferred from homology"/>
<keyword id="KW-0028">Amino-acid biosynthesis</keyword>
<keyword id="KW-0368">Histidine biosynthesis</keyword>
<keyword id="KW-0479">Metal-binding</keyword>
<keyword id="KW-0520">NAD</keyword>
<keyword id="KW-0560">Oxidoreductase</keyword>
<keyword id="KW-0862">Zinc</keyword>